<protein>
    <recommendedName>
        <fullName evidence="1">Large ribosomal subunit protein bL35</fullName>
    </recommendedName>
    <alternativeName>
        <fullName evidence="2">50S ribosomal protein L35</fullName>
    </alternativeName>
</protein>
<keyword id="KW-0687">Ribonucleoprotein</keyword>
<keyword id="KW-0689">Ribosomal protein</keyword>
<accession>P66282</accession>
<accession>Q8NKX4</accession>
<feature type="chain" id="PRO_0000177459" description="Large ribosomal subunit protein bL35">
    <location>
        <begin position="1"/>
        <end position="65"/>
    </location>
</feature>
<name>RL35_XANAC</name>
<organism>
    <name type="scientific">Xanthomonas axonopodis pv. citri (strain 306)</name>
    <dbReference type="NCBI Taxonomy" id="190486"/>
    <lineage>
        <taxon>Bacteria</taxon>
        <taxon>Pseudomonadati</taxon>
        <taxon>Pseudomonadota</taxon>
        <taxon>Gammaproteobacteria</taxon>
        <taxon>Lysobacterales</taxon>
        <taxon>Lysobacteraceae</taxon>
        <taxon>Xanthomonas</taxon>
    </lineage>
</organism>
<gene>
    <name evidence="1" type="primary">rpmI</name>
    <name type="ordered locus">XAC2592</name>
</gene>
<evidence type="ECO:0000255" key="1">
    <source>
        <dbReference type="HAMAP-Rule" id="MF_00514"/>
    </source>
</evidence>
<evidence type="ECO:0000305" key="2"/>
<proteinExistence type="inferred from homology"/>
<reference key="1">
    <citation type="journal article" date="2002" name="Nature">
        <title>Comparison of the genomes of two Xanthomonas pathogens with differing host specificities.</title>
        <authorList>
            <person name="da Silva A.C.R."/>
            <person name="Ferro J.A."/>
            <person name="Reinach F.C."/>
            <person name="Farah C.S."/>
            <person name="Furlan L.R."/>
            <person name="Quaggio R.B."/>
            <person name="Monteiro-Vitorello C.B."/>
            <person name="Van Sluys M.A."/>
            <person name="Almeida N.F. Jr."/>
            <person name="Alves L.M.C."/>
            <person name="do Amaral A.M."/>
            <person name="Bertolini M.C."/>
            <person name="Camargo L.E.A."/>
            <person name="Camarotte G."/>
            <person name="Cannavan F."/>
            <person name="Cardozo J."/>
            <person name="Chambergo F."/>
            <person name="Ciapina L.P."/>
            <person name="Cicarelli R.M.B."/>
            <person name="Coutinho L.L."/>
            <person name="Cursino-Santos J.R."/>
            <person name="El-Dorry H."/>
            <person name="Faria J.B."/>
            <person name="Ferreira A.J.S."/>
            <person name="Ferreira R.C.C."/>
            <person name="Ferro M.I.T."/>
            <person name="Formighieri E.F."/>
            <person name="Franco M.C."/>
            <person name="Greggio C.C."/>
            <person name="Gruber A."/>
            <person name="Katsuyama A.M."/>
            <person name="Kishi L.T."/>
            <person name="Leite R.P."/>
            <person name="Lemos E.G.M."/>
            <person name="Lemos M.V.F."/>
            <person name="Locali E.C."/>
            <person name="Machado M.A."/>
            <person name="Madeira A.M.B.N."/>
            <person name="Martinez-Rossi N.M."/>
            <person name="Martins E.C."/>
            <person name="Meidanis J."/>
            <person name="Menck C.F.M."/>
            <person name="Miyaki C.Y."/>
            <person name="Moon D.H."/>
            <person name="Moreira L.M."/>
            <person name="Novo M.T.M."/>
            <person name="Okura V.K."/>
            <person name="Oliveira M.C."/>
            <person name="Oliveira V.R."/>
            <person name="Pereira H.A."/>
            <person name="Rossi A."/>
            <person name="Sena J.A.D."/>
            <person name="Silva C."/>
            <person name="de Souza R.F."/>
            <person name="Spinola L.A.F."/>
            <person name="Takita M.A."/>
            <person name="Tamura R.E."/>
            <person name="Teixeira E.C."/>
            <person name="Tezza R.I.D."/>
            <person name="Trindade dos Santos M."/>
            <person name="Truffi D."/>
            <person name="Tsai S.M."/>
            <person name="White F.F."/>
            <person name="Setubal J.C."/>
            <person name="Kitajima J.P."/>
        </authorList>
    </citation>
    <scope>NUCLEOTIDE SEQUENCE [LARGE SCALE GENOMIC DNA]</scope>
    <source>
        <strain>306</strain>
    </source>
</reference>
<sequence>MPKIKTNRAAAKRFRKTASGKYKCGHANRSHILTKKATKRKRNLRQTNHVRAEDAGRLDRMLPYL</sequence>
<dbReference type="EMBL" id="AE008923">
    <property type="protein sequence ID" value="AAM37441.1"/>
    <property type="molecule type" value="Genomic_DNA"/>
</dbReference>
<dbReference type="RefSeq" id="WP_002811096.1">
    <property type="nucleotide sequence ID" value="NC_003919.1"/>
</dbReference>
<dbReference type="SMR" id="P66282"/>
<dbReference type="GeneID" id="98193709"/>
<dbReference type="KEGG" id="xac:XAC2592"/>
<dbReference type="eggNOG" id="COG0291">
    <property type="taxonomic scope" value="Bacteria"/>
</dbReference>
<dbReference type="HOGENOM" id="CLU_169643_4_3_6"/>
<dbReference type="Proteomes" id="UP000000576">
    <property type="component" value="Chromosome"/>
</dbReference>
<dbReference type="GO" id="GO:0022625">
    <property type="term" value="C:cytosolic large ribosomal subunit"/>
    <property type="evidence" value="ECO:0007669"/>
    <property type="project" value="TreeGrafter"/>
</dbReference>
<dbReference type="GO" id="GO:0003735">
    <property type="term" value="F:structural constituent of ribosome"/>
    <property type="evidence" value="ECO:0007669"/>
    <property type="project" value="InterPro"/>
</dbReference>
<dbReference type="GO" id="GO:0006412">
    <property type="term" value="P:translation"/>
    <property type="evidence" value="ECO:0007669"/>
    <property type="project" value="UniProtKB-UniRule"/>
</dbReference>
<dbReference type="FunFam" id="4.10.410.60:FF:000001">
    <property type="entry name" value="50S ribosomal protein L35"/>
    <property type="match status" value="1"/>
</dbReference>
<dbReference type="Gene3D" id="4.10.410.60">
    <property type="match status" value="1"/>
</dbReference>
<dbReference type="HAMAP" id="MF_00514">
    <property type="entry name" value="Ribosomal_bL35"/>
    <property type="match status" value="1"/>
</dbReference>
<dbReference type="InterPro" id="IPR001706">
    <property type="entry name" value="Ribosomal_bL35"/>
</dbReference>
<dbReference type="InterPro" id="IPR021137">
    <property type="entry name" value="Ribosomal_bL35-like"/>
</dbReference>
<dbReference type="InterPro" id="IPR018265">
    <property type="entry name" value="Ribosomal_bL35_CS"/>
</dbReference>
<dbReference type="InterPro" id="IPR037229">
    <property type="entry name" value="Ribosomal_bL35_sf"/>
</dbReference>
<dbReference type="NCBIfam" id="TIGR00001">
    <property type="entry name" value="rpmI_bact"/>
    <property type="match status" value="1"/>
</dbReference>
<dbReference type="PANTHER" id="PTHR33343">
    <property type="entry name" value="54S RIBOSOMAL PROTEIN BL35M"/>
    <property type="match status" value="1"/>
</dbReference>
<dbReference type="PANTHER" id="PTHR33343:SF1">
    <property type="entry name" value="LARGE RIBOSOMAL SUBUNIT PROTEIN BL35M"/>
    <property type="match status" value="1"/>
</dbReference>
<dbReference type="Pfam" id="PF01632">
    <property type="entry name" value="Ribosomal_L35p"/>
    <property type="match status" value="1"/>
</dbReference>
<dbReference type="PRINTS" id="PR00064">
    <property type="entry name" value="RIBOSOMALL35"/>
</dbReference>
<dbReference type="SUPFAM" id="SSF143034">
    <property type="entry name" value="L35p-like"/>
    <property type="match status" value="1"/>
</dbReference>
<dbReference type="PROSITE" id="PS00936">
    <property type="entry name" value="RIBOSOMAL_L35"/>
    <property type="match status" value="1"/>
</dbReference>
<comment type="similarity">
    <text evidence="1">Belongs to the bacterial ribosomal protein bL35 family.</text>
</comment>